<evidence type="ECO:0000250" key="1">
    <source>
        <dbReference type="UniProtKB" id="P48995"/>
    </source>
</evidence>
<evidence type="ECO:0000256" key="2">
    <source>
        <dbReference type="SAM" id="MobiDB-lite"/>
    </source>
</evidence>
<evidence type="ECO:0000269" key="3">
    <source>
    </source>
</evidence>
<evidence type="ECO:0000269" key="4">
    <source>
    </source>
</evidence>
<evidence type="ECO:0000303" key="5">
    <source ref="2"/>
</evidence>
<evidence type="ECO:0000305" key="6"/>
<protein>
    <recommendedName>
        <fullName>Short transient receptor potential channel 1</fullName>
        <shortName>TrpC1</shortName>
    </recommendedName>
    <alternativeName>
        <fullName>Transient receptor protein 1</fullName>
        <shortName>TRP-1</shortName>
        <shortName>mTrp1</shortName>
    </alternativeName>
    <alternativeName>
        <fullName>Trp-related protein 1</fullName>
    </alternativeName>
</protein>
<comment type="function">
    <text evidence="1">Forms a receptor-activated non-selective calcium permeant cation channel. Forms a heteromeric ion channel with TRPC4 or TRPC5 that has reduced calcium permeability compared to the homomeric TRPC4 or TRPC5 channel (By similarity). Also permeable to monovalent ions including sodium, lithium and cesium ions (By similarity).</text>
</comment>
<comment type="catalytic activity">
    <reaction evidence="1">
        <text>Ca(2+)(in) = Ca(2+)(out)</text>
        <dbReference type="Rhea" id="RHEA:29671"/>
        <dbReference type="ChEBI" id="CHEBI:29108"/>
    </reaction>
</comment>
<comment type="catalytic activity">
    <reaction evidence="1">
        <text>Na(+)(in) = Na(+)(out)</text>
        <dbReference type="Rhea" id="RHEA:34963"/>
        <dbReference type="ChEBI" id="CHEBI:29101"/>
    </reaction>
</comment>
<comment type="catalytic activity">
    <reaction evidence="1">
        <text>Li(+)(in) = Li(+)(out)</text>
        <dbReference type="Rhea" id="RHEA:78551"/>
        <dbReference type="ChEBI" id="CHEBI:49713"/>
    </reaction>
</comment>
<comment type="catalytic activity">
    <reaction evidence="1">
        <text>Cs(+)(in) = Cs(+)(out)</text>
        <dbReference type="Rhea" id="RHEA:78555"/>
        <dbReference type="ChEBI" id="CHEBI:49547"/>
    </reaction>
</comment>
<comment type="activity regulation">
    <text evidence="1">May be operated by a phosphatidylinositol second messenger system activated by receptor tyrosine kinases or G-protein coupled receptors (By similarity). Also activated by intracellular calcium store depletion (By similarity).</text>
</comment>
<comment type="subunit">
    <text evidence="1 3 4">Heterotetramer with TRPC4 and/or TRPC5 (By similarity). Forms a heteromeric ion channel with TRPC4, with a 1:3 TRPC1:TRPC4 stoichiometry (By similarity). Unlike other TRP channel proteins, does not form a homomeric channel (By similarity). Interacts with TRPC4AP (PubMed:20458742). Interacts with ITPR3 (By similarity). Interacts with MX1 and RNF24 (By similarity). Interacts with FKBP4 (By similarity). Interacts with PLSCR1 (PubMed:32110987). Interacts with PKD2L2 (By similarity). Forms a heterotetramer with PKD2 with a 2:2 stoichiometry; has distinct channel properties separate from PKD2 or TRPC1 homomers alone (By similarity).</text>
</comment>
<comment type="subcellular location">
    <subcellularLocation>
        <location evidence="1">Cell membrane</location>
        <topology evidence="1">Multi-pass membrane protein</topology>
    </subcellularLocation>
</comment>
<comment type="alternative products">
    <event type="alternative splicing"/>
    <isoform>
        <id>Q61056-1</id>
        <name>Alpha</name>
        <sequence type="displayed"/>
    </isoform>
    <isoform>
        <id>Q61056-2</id>
        <name>Beta</name>
        <sequence type="described" ref="VSP_006561"/>
    </isoform>
</comment>
<comment type="PTM">
    <text evidence="1">Activation of PRKCA induces phosphorylation of TRPC1 and subsequent Ca2+ entry into cells.</text>
</comment>
<comment type="similarity">
    <text evidence="6">Belongs to the transient receptor (TC 1.A.4) family. STrpC subfamily. TRPC1 sub-subfamily.</text>
</comment>
<comment type="sequence caution" evidence="6">
    <conflict type="erroneous initiation">
        <sequence resource="EMBL-CDS" id="AAB50622"/>
    </conflict>
    <text>Extended N-terminus.</text>
</comment>
<comment type="sequence caution" evidence="6">
    <conflict type="erroneous initiation">
        <sequence resource="EMBL-CDS" id="AAC53162"/>
    </conflict>
    <text>Extended N-terminus.</text>
</comment>
<comment type="sequence caution" evidence="6">
    <conflict type="erroneous initiation">
        <sequence resource="EMBL-CDS" id="AAF05725"/>
    </conflict>
    <text>Extended N-terminus.</text>
</comment>
<accession>Q61056</accession>
<accession>O35722</accession>
<name>TRPC1_MOUSE</name>
<proteinExistence type="evidence at protein level"/>
<reference key="1">
    <citation type="journal article" date="1997" name="Diabetologia">
        <title>Identification of four trp1 gene variants murine pancreatic beta-cells.</title>
        <authorList>
            <person name="Sakura H."/>
            <person name="Ashcroft F.M."/>
        </authorList>
    </citation>
    <scope>NUCLEOTIDE SEQUENCE [MRNA]</scope>
    <scope>ALTERNATIVE SPLICING</scope>
    <source>
        <tissue>Insulinoma</tissue>
    </source>
</reference>
<reference key="2">
    <citation type="submission" date="1999-10" db="EMBL/GenBank/DDBJ databases">
        <title>Ion channels in lens epithelia.</title>
        <authorList>
            <person name="Rae J.L."/>
        </authorList>
    </citation>
    <scope>NUCLEOTIDE SEQUENCE [MRNA] (ISOFORM BETA)</scope>
    <source>
        <tissue>Lens epithelium</tissue>
    </source>
</reference>
<reference key="3">
    <citation type="journal article" date="1996" name="Cell">
        <title>trp, a novel mammalian gene family essential for agonist-activated capacitative Ca2+ entry.</title>
        <authorList>
            <person name="Zhu X."/>
            <person name="Jiang M."/>
            <person name="Peyton M."/>
            <person name="Boulay G."/>
            <person name="Hurst R."/>
            <person name="Stefani E."/>
            <person name="Birnbaumer L."/>
        </authorList>
    </citation>
    <scope>NUCLEOTIDE SEQUENCE [MRNA] OF 535-658</scope>
</reference>
<reference key="4">
    <citation type="journal article" date="2010" name="J. Cell. Physiol.">
        <title>TRUSS, TNF-R1, and TRPC ion channels synergistically reverse endoplasmic reticulum Ca2+ storage reduction in response to m1 muscarinic acetylcholine receptor signaling.</title>
        <authorList>
            <person name="Mace K.E."/>
            <person name="Lussier M.P."/>
            <person name="Boulay G."/>
            <person name="Terry-Powers J.L."/>
            <person name="Parfrey H."/>
            <person name="Perraud A.L."/>
            <person name="Riches D.W.H."/>
        </authorList>
    </citation>
    <scope>INTERACTION WITH TRPC4AP</scope>
</reference>
<reference key="5">
    <citation type="journal article" date="2020" name="Cells">
        <title>Transient Receptor Potential Canonical 5-Scramblase Signaling Complex Mediates Neuronal Phosphatidylserine Externalization and Apoptosis.</title>
        <authorList>
            <person name="Guo J."/>
            <person name="Li J."/>
            <person name="Xia L."/>
            <person name="Wang Y."/>
            <person name="Zhu J."/>
            <person name="Du J."/>
            <person name="Lu Y."/>
            <person name="Liu G."/>
            <person name="Yao X."/>
            <person name="Shen B."/>
        </authorList>
    </citation>
    <scope>INTERACTION WITH PLSCR1</scope>
</reference>
<keyword id="KW-0025">Alternative splicing</keyword>
<keyword id="KW-0040">ANK repeat</keyword>
<keyword id="KW-0106">Calcium</keyword>
<keyword id="KW-0107">Calcium channel</keyword>
<keyword id="KW-0109">Calcium transport</keyword>
<keyword id="KW-1003">Cell membrane</keyword>
<keyword id="KW-1015">Disulfide bond</keyword>
<keyword id="KW-0407">Ion channel</keyword>
<keyword id="KW-0406">Ion transport</keyword>
<keyword id="KW-0472">Membrane</keyword>
<keyword id="KW-0479">Metal-binding</keyword>
<keyword id="KW-0597">Phosphoprotein</keyword>
<keyword id="KW-1185">Reference proteome</keyword>
<keyword id="KW-0677">Repeat</keyword>
<keyword id="KW-0812">Transmembrane</keyword>
<keyword id="KW-1133">Transmembrane helix</keyword>
<keyword id="KW-0813">Transport</keyword>
<keyword id="KW-0862">Zinc</keyword>
<gene>
    <name type="primary">Trpc1</name>
    <name type="synonym">Trp1</name>
    <name type="synonym">Trrp1</name>
</gene>
<feature type="chain" id="PRO_0000215304" description="Short transient receptor potential channel 1">
    <location>
        <begin position="1"/>
        <end position="793"/>
    </location>
</feature>
<feature type="topological domain" description="Cytoplasmic" evidence="1">
    <location>
        <begin position="1"/>
        <end position="345"/>
    </location>
</feature>
<feature type="intramembrane region" description="Discontinuously helical; Name=Pre-S1" evidence="1">
    <location>
        <begin position="346"/>
        <end position="379"/>
    </location>
</feature>
<feature type="topological domain" description="Cytoplasmic" evidence="1">
    <location>
        <begin position="380"/>
        <end position="386"/>
    </location>
</feature>
<feature type="transmembrane region" description="Helical; Name=S1" evidence="1">
    <location>
        <begin position="387"/>
        <end position="404"/>
    </location>
</feature>
<feature type="topological domain" description="Extracellular" evidence="1">
    <location>
        <begin position="405"/>
        <end position="422"/>
    </location>
</feature>
<feature type="transmembrane region" description="Helical; Name=S2" evidence="1">
    <location>
        <begin position="423"/>
        <end position="439"/>
    </location>
</feature>
<feature type="topological domain" description="Cytoplasmic" evidence="1">
    <location>
        <begin position="440"/>
        <end position="455"/>
    </location>
</feature>
<feature type="transmembrane region" description="Helical; Name=S3" evidence="1">
    <location>
        <begin position="456"/>
        <end position="475"/>
    </location>
</feature>
<feature type="topological domain" description="Extracellular" evidence="1">
    <location>
        <begin position="476"/>
        <end position="496"/>
    </location>
</feature>
<feature type="transmembrane region" description="Helical; Name=S4" evidence="1">
    <location>
        <begin position="497"/>
        <end position="517"/>
    </location>
</feature>
<feature type="topological domain" description="Cytoplasmic" evidence="1">
    <location>
        <begin position="518"/>
        <end position="536"/>
    </location>
</feature>
<feature type="transmembrane region" description="Helical; Name=S5" evidence="1">
    <location>
        <begin position="537"/>
        <end position="558"/>
    </location>
</feature>
<feature type="topological domain" description="Extracellular" evidence="1">
    <location>
        <begin position="559"/>
        <end position="623"/>
    </location>
</feature>
<feature type="transmembrane region" description="Helical; Name=S6" evidence="1">
    <location>
        <begin position="624"/>
        <end position="644"/>
    </location>
</feature>
<feature type="topological domain" description="Cytoplasmic" evidence="1">
    <location>
        <begin position="645"/>
        <end position="793"/>
    </location>
</feature>
<feature type="repeat" description="ANK 1" evidence="1">
    <location>
        <begin position="46"/>
        <end position="75"/>
    </location>
</feature>
<feature type="repeat" description="ANK 2" evidence="1">
    <location>
        <begin position="83"/>
        <end position="109"/>
    </location>
</feature>
<feature type="repeat" description="ANK 3" evidence="1">
    <location>
        <begin position="111"/>
        <end position="156"/>
    </location>
</feature>
<feature type="repeat" description="ANK 4" evidence="1">
    <location>
        <begin position="158"/>
        <end position="180"/>
    </location>
</feature>
<feature type="region of interest" description="Disordered" evidence="2">
    <location>
        <begin position="1"/>
        <end position="30"/>
    </location>
</feature>
<feature type="compositionally biased region" description="Low complexity" evidence="2">
    <location>
        <begin position="15"/>
        <end position="28"/>
    </location>
</feature>
<feature type="binding site" evidence="1">
    <location>
        <position position="189"/>
    </location>
    <ligand>
        <name>Zn(2+)</name>
        <dbReference type="ChEBI" id="CHEBI:29105"/>
    </ligand>
</feature>
<feature type="binding site" evidence="1">
    <location>
        <position position="193"/>
    </location>
    <ligand>
        <name>Zn(2+)</name>
        <dbReference type="ChEBI" id="CHEBI:29105"/>
    </ligand>
</feature>
<feature type="binding site" evidence="1">
    <location>
        <position position="195"/>
    </location>
    <ligand>
        <name>Zn(2+)</name>
        <dbReference type="ChEBI" id="CHEBI:29105"/>
    </ligand>
</feature>
<feature type="binding site" evidence="1">
    <location>
        <position position="198"/>
    </location>
    <ligand>
        <name>Zn(2+)</name>
        <dbReference type="ChEBI" id="CHEBI:29105"/>
    </ligand>
</feature>
<feature type="disulfide bond" evidence="1">
    <location>
        <begin position="571"/>
        <end position="576"/>
    </location>
</feature>
<feature type="splice variant" id="VSP_006561" description="In isoform Beta." evidence="5">
    <location>
        <begin position="110"/>
        <end position="143"/>
    </location>
</feature>
<sequence length="793" mass="91213">MMAALYPSTDLSGVSSSSLPSSPSSSSPNEVMALKDVREVKEENTLNEKLFLLACDKGDYYMVKKILEENSSGDLNINCVDVLGRNAVTITIENESLDILQLLLDYGCQSADALLVAIDSEVVGAVDILLNHRPKRSSRPTIVKLMERIQNPEYSTTMDVAPVILAAHRNNYEILTMLLKQDVSLPKPHAVGCECTLCSAKNKKDSLRHSRFRLDIYRCLASPALIMLTEEDPILRAFELSADLKELSLVEVEFRNDYEELARQCKMFAKDLLAQARNSRELEVILNHTSSDEPLDKRGLLEERMNLSRLKLAIKYNQKEFVSQSNCQQFLNTVWFGQMSGYRRKPTCKKIMTVLTVGIFWPVLSLCYLIAPKSQFGRIIHTPFMKFIIHGASYFTFLLLLNLYSLVYNEDKKNTMGPALERIDYLLILWIIGMIWSDIKRLWYEGLEDFLEESRNQLSFVMNSLYLATFALKVVAHNKFHDFADRKDWDAFHPTLVAEGLFAFANVLSYLRLFFMYTTSSILGPLQISMGQMLQDFGKFLGMFLLVLFSFTIGLTQLYDKGYTSKEQKDCVGIFCEQQSNDTFHSFIGTCFALFWYIFSLAHVAIFVTRFSYGEELQSFVGAVIVGTYNVVVVIVLTKLLVAMLHKSFQLIANHEDKEWKFARAKLWLSYFDDKCTLPPPFNIIPSPKTICYMISSLSKWICSHTSKGKVKRQNSLKEWRNLKQKRDENYQKVMCCLVHRYLTSMRQKMQSTDQATVENLNELRQDLSKFRNEIRDLLGFRTSKYAMFYPRN</sequence>
<dbReference type="EMBL" id="U73625">
    <property type="protein sequence ID" value="AAB50622.1"/>
    <property type="status" value="ALT_INIT"/>
    <property type="molecule type" value="mRNA"/>
</dbReference>
<dbReference type="EMBL" id="U95167">
    <property type="protein sequence ID" value="AAC53162.1"/>
    <property type="status" value="ALT_INIT"/>
    <property type="molecule type" value="mRNA"/>
</dbReference>
<dbReference type="EMBL" id="AF191551">
    <property type="protein sequence ID" value="AAF05725.1"/>
    <property type="status" value="ALT_INIT"/>
    <property type="molecule type" value="mRNA"/>
</dbReference>
<dbReference type="EMBL" id="U40980">
    <property type="protein sequence ID" value="AAC52699.1"/>
    <property type="molecule type" value="mRNA"/>
</dbReference>
<dbReference type="CCDS" id="CCDS23411.1">
    <molecule id="Q61056-1"/>
</dbReference>
<dbReference type="CCDS" id="CCDS81052.1">
    <molecule id="Q61056-2"/>
</dbReference>
<dbReference type="RefSeq" id="NP_001298052.2">
    <molecule id="Q61056-2"/>
    <property type="nucleotide sequence ID" value="NM_001311123.2"/>
</dbReference>
<dbReference type="RefSeq" id="NP_035773.2">
    <molecule id="Q61056-1"/>
    <property type="nucleotide sequence ID" value="NM_011643.4"/>
</dbReference>
<dbReference type="SMR" id="Q61056"/>
<dbReference type="BioGRID" id="204327">
    <property type="interactions" value="4"/>
</dbReference>
<dbReference type="CORUM" id="Q61056"/>
<dbReference type="DIP" id="DIP-33928N"/>
<dbReference type="FunCoup" id="Q61056">
    <property type="interactions" value="80"/>
</dbReference>
<dbReference type="IntAct" id="Q61056">
    <property type="interactions" value="4"/>
</dbReference>
<dbReference type="STRING" id="10090.ENSMUSP00000139672"/>
<dbReference type="iPTMnet" id="Q61056"/>
<dbReference type="PhosphoSitePlus" id="Q61056"/>
<dbReference type="jPOST" id="Q61056"/>
<dbReference type="PaxDb" id="10090-ENSMUSP00000139672"/>
<dbReference type="ProteomicsDB" id="300125">
    <molecule id="Q61056-1"/>
</dbReference>
<dbReference type="ProteomicsDB" id="300126">
    <molecule id="Q61056-2"/>
</dbReference>
<dbReference type="ABCD" id="Q61056">
    <property type="antibodies" value="1 sequenced antibody"/>
</dbReference>
<dbReference type="DNASU" id="22063"/>
<dbReference type="GeneID" id="22063"/>
<dbReference type="KEGG" id="mmu:22063"/>
<dbReference type="UCSC" id="uc009rbj.1">
    <molecule id="Q61056-1"/>
    <property type="organism name" value="mouse"/>
</dbReference>
<dbReference type="AGR" id="MGI:109528"/>
<dbReference type="CTD" id="7220"/>
<dbReference type="MGI" id="MGI:109528">
    <property type="gene designation" value="Trpc1"/>
</dbReference>
<dbReference type="eggNOG" id="KOG3609">
    <property type="taxonomic scope" value="Eukaryota"/>
</dbReference>
<dbReference type="InParanoid" id="Q61056"/>
<dbReference type="OrthoDB" id="2373987at2759"/>
<dbReference type="Reactome" id="R-MMU-3295583">
    <property type="pathway name" value="TRP channels"/>
</dbReference>
<dbReference type="Reactome" id="R-MMU-5578775">
    <property type="pathway name" value="Ion homeostasis"/>
</dbReference>
<dbReference type="Reactome" id="R-MMU-983695">
    <property type="pathway name" value="Antigen activates B Cell Receptor (BCR) leading to generation of second messengers"/>
</dbReference>
<dbReference type="BioGRID-ORCS" id="22063">
    <property type="hits" value="4 hits in 76 CRISPR screens"/>
</dbReference>
<dbReference type="ChiTaRS" id="Trpc1">
    <property type="organism name" value="mouse"/>
</dbReference>
<dbReference type="PRO" id="PR:Q61056"/>
<dbReference type="Proteomes" id="UP000000589">
    <property type="component" value="Unplaced"/>
</dbReference>
<dbReference type="RNAct" id="Q61056">
    <property type="molecule type" value="protein"/>
</dbReference>
<dbReference type="GO" id="GO:0016323">
    <property type="term" value="C:basolateral plasma membrane"/>
    <property type="evidence" value="ECO:0000315"/>
    <property type="project" value="MGI"/>
</dbReference>
<dbReference type="GO" id="GO:0043034">
    <property type="term" value="C:costamere"/>
    <property type="evidence" value="ECO:0000314"/>
    <property type="project" value="MGI"/>
</dbReference>
<dbReference type="GO" id="GO:0005737">
    <property type="term" value="C:cytoplasm"/>
    <property type="evidence" value="ECO:0000314"/>
    <property type="project" value="MGI"/>
</dbReference>
<dbReference type="GO" id="GO:0045121">
    <property type="term" value="C:membrane raft"/>
    <property type="evidence" value="ECO:0000314"/>
    <property type="project" value="MGI"/>
</dbReference>
<dbReference type="GO" id="GO:0005886">
    <property type="term" value="C:plasma membrane"/>
    <property type="evidence" value="ECO:0000266"/>
    <property type="project" value="MGI"/>
</dbReference>
<dbReference type="GO" id="GO:0032991">
    <property type="term" value="C:protein-containing complex"/>
    <property type="evidence" value="ECO:0000353"/>
    <property type="project" value="MGI"/>
</dbReference>
<dbReference type="GO" id="GO:0043235">
    <property type="term" value="C:receptor complex"/>
    <property type="evidence" value="ECO:0000266"/>
    <property type="project" value="MGI"/>
</dbReference>
<dbReference type="GO" id="GO:0030017">
    <property type="term" value="C:sarcomere"/>
    <property type="evidence" value="ECO:0000314"/>
    <property type="project" value="MGI"/>
</dbReference>
<dbReference type="GO" id="GO:0045202">
    <property type="term" value="C:synapse"/>
    <property type="evidence" value="ECO:0007669"/>
    <property type="project" value="GOC"/>
</dbReference>
<dbReference type="GO" id="GO:0015279">
    <property type="term" value="F:store-operated calcium channel activity"/>
    <property type="evidence" value="ECO:0000315"/>
    <property type="project" value="MGI"/>
</dbReference>
<dbReference type="GO" id="GO:1990806">
    <property type="term" value="P:ligand-gated ion channel signaling pathway"/>
    <property type="evidence" value="ECO:0000266"/>
    <property type="project" value="MGI"/>
</dbReference>
<dbReference type="GO" id="GO:0007207">
    <property type="term" value="P:phospholipase C-activating G protein-coupled acetylcholine receptor signaling pathway"/>
    <property type="evidence" value="ECO:0000266"/>
    <property type="project" value="MGI"/>
</dbReference>
<dbReference type="GO" id="GO:0007200">
    <property type="term" value="P:phospholipase C-activating G protein-coupled receptor signaling pathway"/>
    <property type="evidence" value="ECO:0000266"/>
    <property type="project" value="MGI"/>
</dbReference>
<dbReference type="GO" id="GO:0032024">
    <property type="term" value="P:positive regulation of insulin secretion"/>
    <property type="evidence" value="ECO:0000266"/>
    <property type="project" value="MGI"/>
</dbReference>
<dbReference type="GO" id="GO:0046541">
    <property type="term" value="P:saliva secretion"/>
    <property type="evidence" value="ECO:0000315"/>
    <property type="project" value="MGI"/>
</dbReference>
<dbReference type="FunFam" id="1.25.40.20:FF:000088">
    <property type="entry name" value="short transient receptor potential channel 1 isoform X1"/>
    <property type="match status" value="1"/>
</dbReference>
<dbReference type="FunFam" id="1.10.287.70:FF:000266">
    <property type="entry name" value="Transient receptor potential cation channel subfamily c member 1"/>
    <property type="match status" value="1"/>
</dbReference>
<dbReference type="Gene3D" id="1.25.40.20">
    <property type="entry name" value="Ankyrin repeat-containing domain"/>
    <property type="match status" value="1"/>
</dbReference>
<dbReference type="InterPro" id="IPR002110">
    <property type="entry name" value="Ankyrin_rpt"/>
</dbReference>
<dbReference type="InterPro" id="IPR036770">
    <property type="entry name" value="Ankyrin_rpt-contain_sf"/>
</dbReference>
<dbReference type="InterPro" id="IPR005821">
    <property type="entry name" value="Ion_trans_dom"/>
</dbReference>
<dbReference type="InterPro" id="IPR013555">
    <property type="entry name" value="TRP_dom"/>
</dbReference>
<dbReference type="InterPro" id="IPR005457">
    <property type="entry name" value="TRPC1_channel"/>
</dbReference>
<dbReference type="InterPro" id="IPR002153">
    <property type="entry name" value="TRPC_channel"/>
</dbReference>
<dbReference type="NCBIfam" id="TIGR00870">
    <property type="entry name" value="trp"/>
    <property type="match status" value="1"/>
</dbReference>
<dbReference type="PANTHER" id="PTHR10117:SF56">
    <property type="entry name" value="SHORT TRANSIENT RECEPTOR POTENTIAL CHANNEL 1"/>
    <property type="match status" value="1"/>
</dbReference>
<dbReference type="PANTHER" id="PTHR10117">
    <property type="entry name" value="TRANSIENT RECEPTOR POTENTIAL CHANNEL"/>
    <property type="match status" value="1"/>
</dbReference>
<dbReference type="Pfam" id="PF00520">
    <property type="entry name" value="Ion_trans"/>
    <property type="match status" value="1"/>
</dbReference>
<dbReference type="Pfam" id="PF08344">
    <property type="entry name" value="TRP_2"/>
    <property type="match status" value="1"/>
</dbReference>
<dbReference type="PRINTS" id="PR01097">
    <property type="entry name" value="TRNSRECEPTRP"/>
</dbReference>
<dbReference type="PRINTS" id="PR01642">
    <property type="entry name" value="TRPCHANNEL1"/>
</dbReference>
<dbReference type="SMART" id="SM00248">
    <property type="entry name" value="ANK"/>
    <property type="match status" value="3"/>
</dbReference>
<dbReference type="SMART" id="SM01420">
    <property type="entry name" value="TRP_2"/>
    <property type="match status" value="1"/>
</dbReference>
<dbReference type="SUPFAM" id="SSF48403">
    <property type="entry name" value="Ankyrin repeat"/>
    <property type="match status" value="1"/>
</dbReference>
<organism>
    <name type="scientific">Mus musculus</name>
    <name type="common">Mouse</name>
    <dbReference type="NCBI Taxonomy" id="10090"/>
    <lineage>
        <taxon>Eukaryota</taxon>
        <taxon>Metazoa</taxon>
        <taxon>Chordata</taxon>
        <taxon>Craniata</taxon>
        <taxon>Vertebrata</taxon>
        <taxon>Euteleostomi</taxon>
        <taxon>Mammalia</taxon>
        <taxon>Eutheria</taxon>
        <taxon>Euarchontoglires</taxon>
        <taxon>Glires</taxon>
        <taxon>Rodentia</taxon>
        <taxon>Myomorpha</taxon>
        <taxon>Muroidea</taxon>
        <taxon>Muridae</taxon>
        <taxon>Murinae</taxon>
        <taxon>Mus</taxon>
        <taxon>Mus</taxon>
    </lineage>
</organism>